<organism>
    <name type="scientific">Bacillus anthracis</name>
    <dbReference type="NCBI Taxonomy" id="1392"/>
    <lineage>
        <taxon>Bacteria</taxon>
        <taxon>Bacillati</taxon>
        <taxon>Bacillota</taxon>
        <taxon>Bacilli</taxon>
        <taxon>Bacillales</taxon>
        <taxon>Bacillaceae</taxon>
        <taxon>Bacillus</taxon>
        <taxon>Bacillus cereus group</taxon>
    </lineage>
</organism>
<keyword id="KW-0963">Cytoplasm</keyword>
<keyword id="KW-0570">Pentose shunt</keyword>
<keyword id="KW-1185">Reference proteome</keyword>
<keyword id="KW-0704">Schiff base</keyword>
<keyword id="KW-0808">Transferase</keyword>
<feature type="chain" id="PRO_0000173654" description="Probable transaldolase 2">
    <location>
        <begin position="1"/>
        <end position="222"/>
    </location>
</feature>
<feature type="active site" description="Schiff-base intermediate with substrate" evidence="1">
    <location>
        <position position="90"/>
    </location>
</feature>
<evidence type="ECO:0000255" key="1">
    <source>
        <dbReference type="HAMAP-Rule" id="MF_00494"/>
    </source>
</evidence>
<name>TAL2_BACAN</name>
<gene>
    <name evidence="1" type="primary">tal2</name>
    <name type="ordered locus">BA_3430</name>
    <name type="ordered locus">GBAA_3430</name>
    <name type="ordered locus">BAS3179</name>
</gene>
<accession>Q81MY9</accession>
<accession>Q6HW52</accession>
<accession>Q6KQA8</accession>
<reference key="1">
    <citation type="journal article" date="2003" name="Nature">
        <title>The genome sequence of Bacillus anthracis Ames and comparison to closely related bacteria.</title>
        <authorList>
            <person name="Read T.D."/>
            <person name="Peterson S.N."/>
            <person name="Tourasse N.J."/>
            <person name="Baillie L.W."/>
            <person name="Paulsen I.T."/>
            <person name="Nelson K.E."/>
            <person name="Tettelin H."/>
            <person name="Fouts D.E."/>
            <person name="Eisen J.A."/>
            <person name="Gill S.R."/>
            <person name="Holtzapple E.K."/>
            <person name="Okstad O.A."/>
            <person name="Helgason E."/>
            <person name="Rilstone J."/>
            <person name="Wu M."/>
            <person name="Kolonay J.F."/>
            <person name="Beanan M.J."/>
            <person name="Dodson R.J."/>
            <person name="Brinkac L.M."/>
            <person name="Gwinn M.L."/>
            <person name="DeBoy R.T."/>
            <person name="Madpu R."/>
            <person name="Daugherty S.C."/>
            <person name="Durkin A.S."/>
            <person name="Haft D.H."/>
            <person name="Nelson W.C."/>
            <person name="Peterson J.D."/>
            <person name="Pop M."/>
            <person name="Khouri H.M."/>
            <person name="Radune D."/>
            <person name="Benton J.L."/>
            <person name="Mahamoud Y."/>
            <person name="Jiang L."/>
            <person name="Hance I.R."/>
            <person name="Weidman J.F."/>
            <person name="Berry K.J."/>
            <person name="Plaut R.D."/>
            <person name="Wolf A.M."/>
            <person name="Watkins K.L."/>
            <person name="Nierman W.C."/>
            <person name="Hazen A."/>
            <person name="Cline R.T."/>
            <person name="Redmond C."/>
            <person name="Thwaite J.E."/>
            <person name="White O."/>
            <person name="Salzberg S.L."/>
            <person name="Thomason B."/>
            <person name="Friedlander A.M."/>
            <person name="Koehler T.M."/>
            <person name="Hanna P.C."/>
            <person name="Kolstoe A.-B."/>
            <person name="Fraser C.M."/>
        </authorList>
    </citation>
    <scope>NUCLEOTIDE SEQUENCE [LARGE SCALE GENOMIC DNA]</scope>
    <source>
        <strain>Ames / isolate Porton</strain>
    </source>
</reference>
<reference key="2">
    <citation type="journal article" date="2009" name="J. Bacteriol.">
        <title>The complete genome sequence of Bacillus anthracis Ames 'Ancestor'.</title>
        <authorList>
            <person name="Ravel J."/>
            <person name="Jiang L."/>
            <person name="Stanley S.T."/>
            <person name="Wilson M.R."/>
            <person name="Decker R.S."/>
            <person name="Read T.D."/>
            <person name="Worsham P."/>
            <person name="Keim P.S."/>
            <person name="Salzberg S.L."/>
            <person name="Fraser-Liggett C.M."/>
            <person name="Rasko D.A."/>
        </authorList>
    </citation>
    <scope>NUCLEOTIDE SEQUENCE [LARGE SCALE GENOMIC DNA]</scope>
    <source>
        <strain>Ames ancestor</strain>
    </source>
</reference>
<reference key="3">
    <citation type="submission" date="2004-01" db="EMBL/GenBank/DDBJ databases">
        <title>Complete genome sequence of Bacillus anthracis Sterne.</title>
        <authorList>
            <person name="Brettin T.S."/>
            <person name="Bruce D."/>
            <person name="Challacombe J.F."/>
            <person name="Gilna P."/>
            <person name="Han C."/>
            <person name="Hill K."/>
            <person name="Hitchcock P."/>
            <person name="Jackson P."/>
            <person name="Keim P."/>
            <person name="Longmire J."/>
            <person name="Lucas S."/>
            <person name="Okinaka R."/>
            <person name="Richardson P."/>
            <person name="Rubin E."/>
            <person name="Tice H."/>
        </authorList>
    </citation>
    <scope>NUCLEOTIDE SEQUENCE [LARGE SCALE GENOMIC DNA]</scope>
    <source>
        <strain>Sterne</strain>
    </source>
</reference>
<sequence length="222" mass="24008">MKFFIDTANLEDIKKAYKLGVLAGVTTNPSLVAKEGIKFEDRIAEICQAVPKVESVSAEVTPDAVTAEEMIAQAEELIKINGGDEKVTIKLPMTLAGLEACRYLTEKGVKTNVTLIFTVNQALLAARAGATYVSPFLGRLDDISEDGVLLVAKIAELFDVHQLDTQIIAASVRHPDHVTRVAMAGAHIATIPYKVIEQLAMHPLTDQGIEKFAADWAKAPKL</sequence>
<comment type="function">
    <text evidence="1">Transaldolase is important for the balance of metabolites in the pentose-phosphate pathway.</text>
</comment>
<comment type="catalytic activity">
    <reaction evidence="1">
        <text>D-sedoheptulose 7-phosphate + D-glyceraldehyde 3-phosphate = D-erythrose 4-phosphate + beta-D-fructose 6-phosphate</text>
        <dbReference type="Rhea" id="RHEA:17053"/>
        <dbReference type="ChEBI" id="CHEBI:16897"/>
        <dbReference type="ChEBI" id="CHEBI:57483"/>
        <dbReference type="ChEBI" id="CHEBI:57634"/>
        <dbReference type="ChEBI" id="CHEBI:59776"/>
        <dbReference type="EC" id="2.2.1.2"/>
    </reaction>
</comment>
<comment type="pathway">
    <text evidence="1">Carbohydrate degradation; pentose phosphate pathway; D-glyceraldehyde 3-phosphate and beta-D-fructose 6-phosphate from D-ribose 5-phosphate and D-xylulose 5-phosphate (non-oxidative stage): step 2/3.</text>
</comment>
<comment type="subcellular location">
    <subcellularLocation>
        <location evidence="1">Cytoplasm</location>
    </subcellularLocation>
</comment>
<comment type="similarity">
    <text evidence="1">Belongs to the transaldolase family. Type 3B subfamily.</text>
</comment>
<proteinExistence type="inferred from homology"/>
<protein>
    <recommendedName>
        <fullName evidence="1">Probable transaldolase 2</fullName>
        <ecNumber evidence="1">2.2.1.2</ecNumber>
    </recommendedName>
</protein>
<dbReference type="EC" id="2.2.1.2" evidence="1"/>
<dbReference type="EMBL" id="AE016879">
    <property type="protein sequence ID" value="AAP27200.1"/>
    <property type="molecule type" value="Genomic_DNA"/>
</dbReference>
<dbReference type="EMBL" id="AE017334">
    <property type="protein sequence ID" value="AAT32540.1"/>
    <property type="molecule type" value="Genomic_DNA"/>
</dbReference>
<dbReference type="EMBL" id="AE017225">
    <property type="protein sequence ID" value="AAT55487.1"/>
    <property type="molecule type" value="Genomic_DNA"/>
</dbReference>
<dbReference type="RefSeq" id="NP_845714.1">
    <property type="nucleotide sequence ID" value="NC_003997.3"/>
</dbReference>
<dbReference type="RefSeq" id="YP_029436.1">
    <property type="nucleotide sequence ID" value="NC_005945.1"/>
</dbReference>
<dbReference type="SMR" id="Q81MY9"/>
<dbReference type="STRING" id="261594.GBAA_3430"/>
<dbReference type="DNASU" id="1085564"/>
<dbReference type="KEGG" id="ban:BA_3430"/>
<dbReference type="KEGG" id="bar:GBAA_3430"/>
<dbReference type="KEGG" id="bat:BAS3179"/>
<dbReference type="PATRIC" id="fig|198094.11.peg.3405"/>
<dbReference type="eggNOG" id="COG0176">
    <property type="taxonomic scope" value="Bacteria"/>
</dbReference>
<dbReference type="HOGENOM" id="CLU_079764_0_0_9"/>
<dbReference type="OMA" id="DQGMEKF"/>
<dbReference type="OrthoDB" id="9807051at2"/>
<dbReference type="UniPathway" id="UPA00115">
    <property type="reaction ID" value="UER00414"/>
</dbReference>
<dbReference type="Proteomes" id="UP000000427">
    <property type="component" value="Chromosome"/>
</dbReference>
<dbReference type="Proteomes" id="UP000000594">
    <property type="component" value="Chromosome"/>
</dbReference>
<dbReference type="GO" id="GO:0005737">
    <property type="term" value="C:cytoplasm"/>
    <property type="evidence" value="ECO:0007669"/>
    <property type="project" value="UniProtKB-SubCell"/>
</dbReference>
<dbReference type="GO" id="GO:0016832">
    <property type="term" value="F:aldehyde-lyase activity"/>
    <property type="evidence" value="ECO:0007669"/>
    <property type="project" value="InterPro"/>
</dbReference>
<dbReference type="GO" id="GO:0004801">
    <property type="term" value="F:transaldolase activity"/>
    <property type="evidence" value="ECO:0007669"/>
    <property type="project" value="UniProtKB-UniRule"/>
</dbReference>
<dbReference type="GO" id="GO:0005975">
    <property type="term" value="P:carbohydrate metabolic process"/>
    <property type="evidence" value="ECO:0007669"/>
    <property type="project" value="InterPro"/>
</dbReference>
<dbReference type="GO" id="GO:0006098">
    <property type="term" value="P:pentose-phosphate shunt"/>
    <property type="evidence" value="ECO:0007669"/>
    <property type="project" value="UniProtKB-UniRule"/>
</dbReference>
<dbReference type="CDD" id="cd00956">
    <property type="entry name" value="Transaldolase_FSA"/>
    <property type="match status" value="1"/>
</dbReference>
<dbReference type="FunFam" id="3.20.20.70:FF:000018">
    <property type="entry name" value="Probable transaldolase"/>
    <property type="match status" value="1"/>
</dbReference>
<dbReference type="Gene3D" id="3.20.20.70">
    <property type="entry name" value="Aldolase class I"/>
    <property type="match status" value="1"/>
</dbReference>
<dbReference type="HAMAP" id="MF_00494">
    <property type="entry name" value="Transaldolase_3b"/>
    <property type="match status" value="1"/>
</dbReference>
<dbReference type="InterPro" id="IPR013785">
    <property type="entry name" value="Aldolase_TIM"/>
</dbReference>
<dbReference type="InterPro" id="IPR001585">
    <property type="entry name" value="TAL/FSA"/>
</dbReference>
<dbReference type="InterPro" id="IPR022999">
    <property type="entry name" value="Transaldolase_3B"/>
</dbReference>
<dbReference type="InterPro" id="IPR004731">
    <property type="entry name" value="Transaldolase_3B/F6P_aldolase"/>
</dbReference>
<dbReference type="InterPro" id="IPR018225">
    <property type="entry name" value="Transaldolase_AS"/>
</dbReference>
<dbReference type="InterPro" id="IPR033919">
    <property type="entry name" value="TSA/FSA_arc/bac"/>
</dbReference>
<dbReference type="NCBIfam" id="TIGR00875">
    <property type="entry name" value="fsa_talC_mipB"/>
    <property type="match status" value="1"/>
</dbReference>
<dbReference type="PANTHER" id="PTHR10683">
    <property type="entry name" value="TRANSALDOLASE"/>
    <property type="match status" value="1"/>
</dbReference>
<dbReference type="PANTHER" id="PTHR10683:SF36">
    <property type="entry name" value="TRANSALDOLASE"/>
    <property type="match status" value="1"/>
</dbReference>
<dbReference type="Pfam" id="PF00923">
    <property type="entry name" value="TAL_FSA"/>
    <property type="match status" value="1"/>
</dbReference>
<dbReference type="SUPFAM" id="SSF51569">
    <property type="entry name" value="Aldolase"/>
    <property type="match status" value="1"/>
</dbReference>
<dbReference type="PROSITE" id="PS01054">
    <property type="entry name" value="TRANSALDOLASE_1"/>
    <property type="match status" value="1"/>
</dbReference>
<dbReference type="PROSITE" id="PS00958">
    <property type="entry name" value="TRANSALDOLASE_2"/>
    <property type="match status" value="1"/>
</dbReference>